<organism>
    <name type="scientific">Rickettsia prowazekii (strain Madrid E)</name>
    <dbReference type="NCBI Taxonomy" id="272947"/>
    <lineage>
        <taxon>Bacteria</taxon>
        <taxon>Pseudomonadati</taxon>
        <taxon>Pseudomonadota</taxon>
        <taxon>Alphaproteobacteria</taxon>
        <taxon>Rickettsiales</taxon>
        <taxon>Rickettsiaceae</taxon>
        <taxon>Rickettsieae</taxon>
        <taxon>Rickettsia</taxon>
        <taxon>typhus group</taxon>
    </lineage>
</organism>
<sequence length="354" mass="40635">MNIWVIADDRTGNTHQAIALAAQLTGKYTTITLEYNFLAKLPNFLLQYYPIHIKRELLQDIIDKLPPDMIITAGRRTAVLAFYLKKKFENIKLVQIMQPNLPYNIFDAIILPYHDYRDLLYCGPAKILSKNIKSHCKVLNYSSRQHDIEKMMKIIPINGALNNITAKFSAASLELQKHYPHLKQFTAVIIGGNNKRFSFNEDIAILFSSLLNKIYSNQAIPFFISFSRRTPQIVKSIIKNNTHASTMIYDPSKDTDYNNPYIDMLANAKYIISTADSISMCSEAASSGKPLYIFYPPNFNSLKHKIFIEQLVEQKIARIFNESITMLEEYSYKPLNEAKKVAEIIKFALKINKS</sequence>
<dbReference type="EMBL" id="AJ235270">
    <property type="protein sequence ID" value="CAA14589.1"/>
    <property type="molecule type" value="Genomic_DNA"/>
</dbReference>
<dbReference type="PIR" id="F71721">
    <property type="entry name" value="F71721"/>
</dbReference>
<dbReference type="RefSeq" id="NP_220512.1">
    <property type="nucleotide sequence ID" value="NC_000963.1"/>
</dbReference>
<dbReference type="RefSeq" id="WP_004599753.1">
    <property type="nucleotide sequence ID" value="NC_000963.1"/>
</dbReference>
<dbReference type="STRING" id="272947.gene:17555203"/>
<dbReference type="EnsemblBacteria" id="CAA14589">
    <property type="protein sequence ID" value="CAA14589"/>
    <property type="gene ID" value="CAA14589"/>
</dbReference>
<dbReference type="KEGG" id="rpr:RP120"/>
<dbReference type="PATRIC" id="fig|272947.5.peg.122"/>
<dbReference type="eggNOG" id="COG3660">
    <property type="taxonomic scope" value="Bacteria"/>
</dbReference>
<dbReference type="HOGENOM" id="CLU_048241_0_0_5"/>
<dbReference type="OrthoDB" id="272235at2"/>
<dbReference type="Proteomes" id="UP000002480">
    <property type="component" value="Chromosome"/>
</dbReference>
<dbReference type="InterPro" id="IPR009367">
    <property type="entry name" value="Elm1-like"/>
</dbReference>
<dbReference type="PANTHER" id="PTHR33986:SF15">
    <property type="entry name" value="MITOCHONDRIAL FISSION PROTEIN ELM1"/>
    <property type="match status" value="1"/>
</dbReference>
<dbReference type="PANTHER" id="PTHR33986">
    <property type="entry name" value="OS02G0535700 PROTEIN"/>
    <property type="match status" value="1"/>
</dbReference>
<dbReference type="Pfam" id="PF06258">
    <property type="entry name" value="Mito_fiss_Elm1"/>
    <property type="match status" value="1"/>
</dbReference>
<dbReference type="SUPFAM" id="SSF53756">
    <property type="entry name" value="UDP-Glycosyltransferase/glycogen phosphorylase"/>
    <property type="match status" value="1"/>
</dbReference>
<name>Y120_RICPR</name>
<keyword id="KW-1185">Reference proteome</keyword>
<gene>
    <name type="ordered locus">RP120</name>
</gene>
<accession>Q9ZE28</accession>
<protein>
    <recommendedName>
        <fullName>Uncharacterized protein RP120</fullName>
    </recommendedName>
</protein>
<reference key="1">
    <citation type="journal article" date="1998" name="Nature">
        <title>The genome sequence of Rickettsia prowazekii and the origin of mitochondria.</title>
        <authorList>
            <person name="Andersson S.G.E."/>
            <person name="Zomorodipour A."/>
            <person name="Andersson J.O."/>
            <person name="Sicheritz-Ponten T."/>
            <person name="Alsmark U.C.M."/>
            <person name="Podowski R.M."/>
            <person name="Naeslund A.K."/>
            <person name="Eriksson A.-S."/>
            <person name="Winkler H.H."/>
            <person name="Kurland C.G."/>
        </authorList>
    </citation>
    <scope>NUCLEOTIDE SEQUENCE [LARGE SCALE GENOMIC DNA]</scope>
    <source>
        <strain>Madrid E</strain>
    </source>
</reference>
<proteinExistence type="predicted"/>
<feature type="chain" id="PRO_0000101318" description="Uncharacterized protein RP120">
    <location>
        <begin position="1"/>
        <end position="354"/>
    </location>
</feature>